<proteinExistence type="inferred from homology"/>
<dbReference type="EMBL" id="J03654">
    <property type="protein sequence ID" value="AAB00759.1"/>
    <property type="molecule type" value="Genomic_DNA"/>
</dbReference>
<dbReference type="Proteomes" id="UP000246679">
    <property type="component" value="Segment"/>
</dbReference>
<dbReference type="GO" id="GO:0044196">
    <property type="term" value="C:host cell nucleolus"/>
    <property type="evidence" value="ECO:0007669"/>
    <property type="project" value="UniProtKB-SubCell"/>
</dbReference>
<dbReference type="GO" id="GO:0003723">
    <property type="term" value="F:RNA binding"/>
    <property type="evidence" value="ECO:0007669"/>
    <property type="project" value="UniProtKB-KW"/>
</dbReference>
<dbReference type="GO" id="GO:0001070">
    <property type="term" value="F:RNA-binding transcription regulator activity"/>
    <property type="evidence" value="ECO:0007669"/>
    <property type="project" value="InterPro"/>
</dbReference>
<dbReference type="GO" id="GO:0050434">
    <property type="term" value="P:positive regulation of viral transcription"/>
    <property type="evidence" value="ECO:0007669"/>
    <property type="project" value="InterPro"/>
</dbReference>
<dbReference type="Gene3D" id="4.10.20.10">
    <property type="entry name" value="Tat domain"/>
    <property type="match status" value="1"/>
</dbReference>
<dbReference type="InterPro" id="IPR001831">
    <property type="entry name" value="IV_Tat"/>
</dbReference>
<dbReference type="InterPro" id="IPR036963">
    <property type="entry name" value="Tat_dom_sf"/>
</dbReference>
<dbReference type="Pfam" id="PF00539">
    <property type="entry name" value="Tat"/>
    <property type="match status" value="1"/>
</dbReference>
<dbReference type="PRINTS" id="PR00055">
    <property type="entry name" value="HIVTATDOMAIN"/>
</dbReference>
<keyword id="KW-0010">Activator</keyword>
<keyword id="KW-0014">AIDS</keyword>
<keyword id="KW-0025">Alternative splicing</keyword>
<keyword id="KW-1048">Host nucleus</keyword>
<keyword id="KW-0945">Host-virus interaction</keyword>
<keyword id="KW-0597">Phosphoprotein</keyword>
<keyword id="KW-0694">RNA-binding</keyword>
<keyword id="KW-0804">Transcription</keyword>
<keyword id="KW-0805">Transcription regulation</keyword>
<organism>
    <name type="scientific">Human immunodeficiency virus type 2 subtype A (isolate NIH-Z)</name>
    <name type="common">HIV-2</name>
    <dbReference type="NCBI Taxonomy" id="11719"/>
    <lineage>
        <taxon>Viruses</taxon>
        <taxon>Riboviria</taxon>
        <taxon>Pararnavirae</taxon>
        <taxon>Artverviricota</taxon>
        <taxon>Revtraviricetes</taxon>
        <taxon>Ortervirales</taxon>
        <taxon>Retroviridae</taxon>
        <taxon>Orthoretrovirinae</taxon>
        <taxon>Lentivirus</taxon>
        <taxon>Human immunodeficiency virus 2</taxon>
    </lineage>
</organism>
<sequence>METPLKAPESSLESCNEPSSRTSEQDVATQELARQGEEILSQLYRPLEACTNSCYCKKCCYDCQLCFLQKGLGIWYDRKGRRRRTPKKTKAHPSSASDKSISTRTRNSQPEKKQKKTLEATVETDLGLGR</sequence>
<name>TAT_HV2NZ</name>
<feature type="chain" id="PRO_0000085373" description="Protein Tat">
    <location>
        <begin position="1"/>
        <end position="130"/>
    </location>
</feature>
<feature type="region of interest" description="Disordered" evidence="3">
    <location>
        <begin position="1"/>
        <end position="30"/>
    </location>
</feature>
<feature type="region of interest" description="Cysteine-rich" evidence="1">
    <location>
        <begin position="50"/>
        <end position="66"/>
    </location>
</feature>
<feature type="region of interest" description="Core" evidence="1">
    <location>
        <begin position="67"/>
        <end position="77"/>
    </location>
</feature>
<feature type="region of interest" description="Disordered" evidence="3">
    <location>
        <begin position="78"/>
        <end position="130"/>
    </location>
</feature>
<feature type="short sequence motif" description="Nuclear localization signal, and RNA-binding (TAR)" evidence="1">
    <location>
        <begin position="78"/>
        <end position="90"/>
    </location>
</feature>
<feature type="compositionally biased region" description="Polar residues" evidence="3">
    <location>
        <begin position="11"/>
        <end position="28"/>
    </location>
</feature>
<feature type="compositionally biased region" description="Basic residues" evidence="3">
    <location>
        <begin position="79"/>
        <end position="91"/>
    </location>
</feature>
<feature type="compositionally biased region" description="Polar residues" evidence="3">
    <location>
        <begin position="92"/>
        <end position="108"/>
    </location>
</feature>
<feature type="compositionally biased region" description="Basic and acidic residues" evidence="3">
    <location>
        <begin position="109"/>
        <end position="118"/>
    </location>
</feature>
<feature type="modified residue" description="Phosphothreonine; by host CDK9" evidence="1">
    <location>
        <position position="85"/>
    </location>
</feature>
<feature type="modified residue" description="Phosphothreonine; by host CDK9" evidence="1">
    <location>
        <position position="89"/>
    </location>
</feature>
<feature type="modified residue" description="Phosphoserine; by host CDK9" evidence="1">
    <location>
        <position position="94"/>
    </location>
</feature>
<feature type="splice variant" id="VSP_022443" description="In isoform Short." evidence="4">
    <location>
        <begin position="100"/>
        <end position="130"/>
    </location>
</feature>
<comment type="function">
    <text evidence="2">Transcriptional activator that increases RNA Pol II processivity, thereby increasing the level of full-length viral transcripts. Recognizes a hairpin structure at the 5'-LTR of the nascent viral mRNAs referred to as the transactivation responsive RNA element (TAR) and recruits the cyclin T1-CDK9 complex (P-TEFb complex) that will in turn hyperphosphorylate the RNA polymerase II to allow efficient elongation. The CDK9 component of P-TEFb and other Tat-activated kinases hyperphosphorylate the C-terminus of RNA Pol II that becomes stabilized and much more processive.</text>
</comment>
<comment type="function">
    <text evidence="1">Extracellular circulating Tat can be endocytosed by surrounding uninfected cells via the binding to several surface receptors. Endosomal low pH allows Tat to cross the endosome membrane to enter the cytosol and eventually further translocate into the nucleus, thereby inducing severe cell dysfunctions ranging from cell activation to cell death. Through (By similarity).</text>
</comment>
<comment type="subunit">
    <text evidence="1">Interacts with host CCNT1. Associates with the P-TEFb complex composed at least of Tat, P-TEFb (CDK9 and CCNT1), TAR RNA, RNA Pol II. Interacts with CCNT2; the resulting complex is unable to bind to TAR RNA (By similarity).</text>
</comment>
<comment type="subcellular location">
    <subcellularLocation>
        <location evidence="1">Host nucleus</location>
        <location evidence="1">Host nucleolus</location>
    </subcellularLocation>
</comment>
<comment type="alternative products">
    <event type="alternative splicing"/>
    <isoform>
        <id>P05909-1</id>
        <name>Long</name>
        <sequence type="displayed"/>
    </isoform>
    <isoform>
        <id>P05909-2</id>
        <name>Short</name>
        <sequence type="described" ref="VSP_022443"/>
    </isoform>
</comment>
<comment type="domain">
    <text evidence="1">The Arg-rich RNA-binding region binds the TAR RNA. This region also mediates the nuclear localization (By similarity).</text>
</comment>
<comment type="PTM">
    <text evidence="1">The phosphorylation by CDK9 does not seem to be important for transactivation function.</text>
</comment>
<comment type="miscellaneous">
    <molecule>Isoform Short</molecule>
    <text evidence="4">Expressed in the late stage of the infection cycle, when unspliced viral RNAs are exported to the cytoplasm by the viral Rev protein.</text>
</comment>
<comment type="similarity">
    <text evidence="4">Belongs to the lentiviruses Tat family.</text>
</comment>
<reference key="1">
    <citation type="journal article" date="1988" name="Proc. Natl. Acad. Sci. U.S.A.">
        <title>Genetic variability between isolates of human immunodeficiency virus (HIV) type 2 is comparable to the variability among HIV type 1.</title>
        <authorList>
            <person name="Zagury J.F."/>
            <person name="Franchini G."/>
            <person name="Reitz M.S. Jr."/>
            <person name="Collalti E."/>
            <person name="Starcich B.R."/>
            <person name="Hall L."/>
            <person name="Fargnoli K.A."/>
            <person name="Jagodzinski L.L."/>
            <person name="Guo H.-G."/>
            <person name="Laure F."/>
            <person name="Arya S.K."/>
            <person name="Josephs S.F."/>
            <person name="Zagury D."/>
            <person name="Wong-Staal F."/>
            <person name="Gallo R.C."/>
        </authorList>
    </citation>
    <scope>NUCLEOTIDE SEQUENCE [GENOMIC DNA]</scope>
</reference>
<reference key="2">
    <citation type="journal article" date="2005" name="Microbes Infect.">
        <title>Decoding Tat: the biology of HIV Tat posttranslational modifications.</title>
        <authorList>
            <person name="Hetzer C."/>
            <person name="Dormeyer W."/>
            <person name="Schnolzer M."/>
            <person name="Ott M."/>
        </authorList>
    </citation>
    <scope>REVIEW</scope>
    <scope>ALTERNATIVE SPLICING</scope>
</reference>
<organismHost>
    <name type="scientific">Homo sapiens</name>
    <name type="common">Human</name>
    <dbReference type="NCBI Taxonomy" id="9606"/>
</organismHost>
<gene>
    <name type="primary">tat</name>
</gene>
<evidence type="ECO:0000250" key="1"/>
<evidence type="ECO:0000250" key="2">
    <source>
        <dbReference type="UniProtKB" id="P04608"/>
    </source>
</evidence>
<evidence type="ECO:0000256" key="3">
    <source>
        <dbReference type="SAM" id="MobiDB-lite"/>
    </source>
</evidence>
<evidence type="ECO:0000305" key="4"/>
<protein>
    <recommendedName>
        <fullName>Protein Tat</fullName>
    </recommendedName>
    <alternativeName>
        <fullName>Transactivating regulatory protein</fullName>
    </alternativeName>
</protein>
<accession>P05909</accession>